<gene>
    <name evidence="1" type="primary">rpsP</name>
    <name type="ordered locus">mlr4381</name>
</gene>
<comment type="similarity">
    <text evidence="1">Belongs to the bacterial ribosomal protein bS16 family.</text>
</comment>
<accession>Q98E70</accession>
<organism>
    <name type="scientific">Mesorhizobium japonicum (strain LMG 29417 / CECT 9101 / MAFF 303099)</name>
    <name type="common">Mesorhizobium loti (strain MAFF 303099)</name>
    <dbReference type="NCBI Taxonomy" id="266835"/>
    <lineage>
        <taxon>Bacteria</taxon>
        <taxon>Pseudomonadati</taxon>
        <taxon>Pseudomonadota</taxon>
        <taxon>Alphaproteobacteria</taxon>
        <taxon>Hyphomicrobiales</taxon>
        <taxon>Phyllobacteriaceae</taxon>
        <taxon>Mesorhizobium</taxon>
    </lineage>
</organism>
<name>RS16_RHILO</name>
<keyword id="KW-0687">Ribonucleoprotein</keyword>
<keyword id="KW-0689">Ribosomal protein</keyword>
<proteinExistence type="inferred from homology"/>
<evidence type="ECO:0000255" key="1">
    <source>
        <dbReference type="HAMAP-Rule" id="MF_00385"/>
    </source>
</evidence>
<evidence type="ECO:0000256" key="2">
    <source>
        <dbReference type="SAM" id="MobiDB-lite"/>
    </source>
</evidence>
<evidence type="ECO:0000305" key="3"/>
<sequence length="133" mass="14358">MALKIRLARAGSKKRPYYHVVVADARSPRDGRFIESLGSWNPLLPKDGERVKVDADRVKHWLSHGAQPTDRVLRFLDEAGLAKRDARSNPKKAEPGKKAQERAALLKKAQEDAAAAVAAAAAAPAEAEAATAE</sequence>
<dbReference type="EMBL" id="BA000012">
    <property type="protein sequence ID" value="BAB51050.1"/>
    <property type="molecule type" value="Genomic_DNA"/>
</dbReference>
<dbReference type="RefSeq" id="WP_010912392.1">
    <property type="nucleotide sequence ID" value="NC_002678.2"/>
</dbReference>
<dbReference type="SMR" id="Q98E70"/>
<dbReference type="GeneID" id="66681199"/>
<dbReference type="KEGG" id="mlo:mlr4381"/>
<dbReference type="eggNOG" id="COG0228">
    <property type="taxonomic scope" value="Bacteria"/>
</dbReference>
<dbReference type="HOGENOM" id="CLU_100590_3_1_5"/>
<dbReference type="Proteomes" id="UP000000552">
    <property type="component" value="Chromosome"/>
</dbReference>
<dbReference type="GO" id="GO:0005737">
    <property type="term" value="C:cytoplasm"/>
    <property type="evidence" value="ECO:0007669"/>
    <property type="project" value="UniProtKB-ARBA"/>
</dbReference>
<dbReference type="GO" id="GO:0015935">
    <property type="term" value="C:small ribosomal subunit"/>
    <property type="evidence" value="ECO:0007669"/>
    <property type="project" value="TreeGrafter"/>
</dbReference>
<dbReference type="GO" id="GO:0003735">
    <property type="term" value="F:structural constituent of ribosome"/>
    <property type="evidence" value="ECO:0007669"/>
    <property type="project" value="InterPro"/>
</dbReference>
<dbReference type="GO" id="GO:0006412">
    <property type="term" value="P:translation"/>
    <property type="evidence" value="ECO:0007669"/>
    <property type="project" value="UniProtKB-UniRule"/>
</dbReference>
<dbReference type="Gene3D" id="3.30.1320.10">
    <property type="match status" value="1"/>
</dbReference>
<dbReference type="HAMAP" id="MF_00385">
    <property type="entry name" value="Ribosomal_bS16"/>
    <property type="match status" value="1"/>
</dbReference>
<dbReference type="InterPro" id="IPR000307">
    <property type="entry name" value="Ribosomal_bS16"/>
</dbReference>
<dbReference type="InterPro" id="IPR023803">
    <property type="entry name" value="Ribosomal_bS16_dom_sf"/>
</dbReference>
<dbReference type="NCBIfam" id="TIGR00002">
    <property type="entry name" value="S16"/>
    <property type="match status" value="1"/>
</dbReference>
<dbReference type="PANTHER" id="PTHR12919">
    <property type="entry name" value="30S RIBOSOMAL PROTEIN S16"/>
    <property type="match status" value="1"/>
</dbReference>
<dbReference type="PANTHER" id="PTHR12919:SF20">
    <property type="entry name" value="SMALL RIBOSOMAL SUBUNIT PROTEIN BS16M"/>
    <property type="match status" value="1"/>
</dbReference>
<dbReference type="Pfam" id="PF00886">
    <property type="entry name" value="Ribosomal_S16"/>
    <property type="match status" value="1"/>
</dbReference>
<dbReference type="SUPFAM" id="SSF54565">
    <property type="entry name" value="Ribosomal protein S16"/>
    <property type="match status" value="1"/>
</dbReference>
<protein>
    <recommendedName>
        <fullName evidence="1">Small ribosomal subunit protein bS16</fullName>
    </recommendedName>
    <alternativeName>
        <fullName evidence="3">30S ribosomal protein S16</fullName>
    </alternativeName>
</protein>
<feature type="chain" id="PRO_0000167230" description="Small ribosomal subunit protein bS16">
    <location>
        <begin position="1"/>
        <end position="133"/>
    </location>
</feature>
<feature type="region of interest" description="Disordered" evidence="2">
    <location>
        <begin position="83"/>
        <end position="102"/>
    </location>
</feature>
<feature type="compositionally biased region" description="Basic and acidic residues" evidence="2">
    <location>
        <begin position="83"/>
        <end position="101"/>
    </location>
</feature>
<reference key="1">
    <citation type="journal article" date="2000" name="DNA Res.">
        <title>Complete genome structure of the nitrogen-fixing symbiotic bacterium Mesorhizobium loti.</title>
        <authorList>
            <person name="Kaneko T."/>
            <person name="Nakamura Y."/>
            <person name="Sato S."/>
            <person name="Asamizu E."/>
            <person name="Kato T."/>
            <person name="Sasamoto S."/>
            <person name="Watanabe A."/>
            <person name="Idesawa K."/>
            <person name="Ishikawa A."/>
            <person name="Kawashima K."/>
            <person name="Kimura T."/>
            <person name="Kishida Y."/>
            <person name="Kiyokawa C."/>
            <person name="Kohara M."/>
            <person name="Matsumoto M."/>
            <person name="Matsuno A."/>
            <person name="Mochizuki Y."/>
            <person name="Nakayama S."/>
            <person name="Nakazaki N."/>
            <person name="Shimpo S."/>
            <person name="Sugimoto M."/>
            <person name="Takeuchi C."/>
            <person name="Yamada M."/>
            <person name="Tabata S."/>
        </authorList>
    </citation>
    <scope>NUCLEOTIDE SEQUENCE [LARGE SCALE GENOMIC DNA]</scope>
    <source>
        <strain>LMG 29417 / CECT 9101 / MAFF 303099</strain>
    </source>
</reference>